<organism>
    <name type="scientific">Burkholderia pseudomallei (strain K96243)</name>
    <dbReference type="NCBI Taxonomy" id="272560"/>
    <lineage>
        <taxon>Bacteria</taxon>
        <taxon>Pseudomonadati</taxon>
        <taxon>Pseudomonadota</taxon>
        <taxon>Betaproteobacteria</taxon>
        <taxon>Burkholderiales</taxon>
        <taxon>Burkholderiaceae</taxon>
        <taxon>Burkholderia</taxon>
        <taxon>pseudomallei group</taxon>
    </lineage>
</organism>
<comment type="subunit">
    <text evidence="1">Part of the 50S ribosomal subunit.</text>
</comment>
<comment type="similarity">
    <text evidence="1">Belongs to the universal ribosomal protein uL30 family.</text>
</comment>
<feature type="chain" id="PRO_0000273759" description="Large ribosomal subunit protein uL30">
    <location>
        <begin position="1"/>
        <end position="60"/>
    </location>
</feature>
<gene>
    <name evidence="1" type="primary">rpmD</name>
    <name type="ordered locus">BPSL3195</name>
</gene>
<evidence type="ECO:0000255" key="1">
    <source>
        <dbReference type="HAMAP-Rule" id="MF_01371"/>
    </source>
</evidence>
<evidence type="ECO:0000305" key="2"/>
<protein>
    <recommendedName>
        <fullName evidence="1">Large ribosomal subunit protein uL30</fullName>
    </recommendedName>
    <alternativeName>
        <fullName evidence="2">50S ribosomal protein L30</fullName>
    </alternativeName>
</protein>
<keyword id="KW-1185">Reference proteome</keyword>
<keyword id="KW-0687">Ribonucleoprotein</keyword>
<keyword id="KW-0689">Ribosomal protein</keyword>
<reference key="1">
    <citation type="journal article" date="2004" name="Proc. Natl. Acad. Sci. U.S.A.">
        <title>Genomic plasticity of the causative agent of melioidosis, Burkholderia pseudomallei.</title>
        <authorList>
            <person name="Holden M.T.G."/>
            <person name="Titball R.W."/>
            <person name="Peacock S.J."/>
            <person name="Cerdeno-Tarraga A.-M."/>
            <person name="Atkins T."/>
            <person name="Crossman L.C."/>
            <person name="Pitt T."/>
            <person name="Churcher C."/>
            <person name="Mungall K.L."/>
            <person name="Bentley S.D."/>
            <person name="Sebaihia M."/>
            <person name="Thomson N.R."/>
            <person name="Bason N."/>
            <person name="Beacham I.R."/>
            <person name="Brooks K."/>
            <person name="Brown K.A."/>
            <person name="Brown N.F."/>
            <person name="Challis G.L."/>
            <person name="Cherevach I."/>
            <person name="Chillingworth T."/>
            <person name="Cronin A."/>
            <person name="Crossett B."/>
            <person name="Davis P."/>
            <person name="DeShazer D."/>
            <person name="Feltwell T."/>
            <person name="Fraser A."/>
            <person name="Hance Z."/>
            <person name="Hauser H."/>
            <person name="Holroyd S."/>
            <person name="Jagels K."/>
            <person name="Keith K.E."/>
            <person name="Maddison M."/>
            <person name="Moule S."/>
            <person name="Price C."/>
            <person name="Quail M.A."/>
            <person name="Rabbinowitsch E."/>
            <person name="Rutherford K."/>
            <person name="Sanders M."/>
            <person name="Simmonds M."/>
            <person name="Songsivilai S."/>
            <person name="Stevens K."/>
            <person name="Tumapa S."/>
            <person name="Vesaratchavest M."/>
            <person name="Whitehead S."/>
            <person name="Yeats C."/>
            <person name="Barrell B.G."/>
            <person name="Oyston P.C.F."/>
            <person name="Parkhill J."/>
        </authorList>
    </citation>
    <scope>NUCLEOTIDE SEQUENCE [LARGE SCALE GENOMIC DNA]</scope>
    <source>
        <strain>K96243</strain>
    </source>
</reference>
<sequence>MSEKTVKVQLVKSLIGTRESHRATVRGLGLRRLNSVSELQDTPAVRGMINKVSYLVKVIG</sequence>
<proteinExistence type="inferred from homology"/>
<name>RL30_BURPS</name>
<accession>Q63Q29</accession>
<dbReference type="EMBL" id="BX571965">
    <property type="protein sequence ID" value="CAH37206.1"/>
    <property type="molecule type" value="Genomic_DNA"/>
</dbReference>
<dbReference type="RefSeq" id="WP_004202755.1">
    <property type="nucleotide sequence ID" value="NZ_CP009538.1"/>
</dbReference>
<dbReference type="RefSeq" id="YP_109789.1">
    <property type="nucleotide sequence ID" value="NC_006350.1"/>
</dbReference>
<dbReference type="SMR" id="Q63Q29"/>
<dbReference type="STRING" id="272560.BPSL3195"/>
<dbReference type="GeneID" id="93061814"/>
<dbReference type="KEGG" id="bps:BPSL3195"/>
<dbReference type="PATRIC" id="fig|272560.51.peg.2043"/>
<dbReference type="eggNOG" id="COG1841">
    <property type="taxonomic scope" value="Bacteria"/>
</dbReference>
<dbReference type="PRO" id="PR:Q63Q29"/>
<dbReference type="Proteomes" id="UP000000605">
    <property type="component" value="Chromosome 1"/>
</dbReference>
<dbReference type="GO" id="GO:0022625">
    <property type="term" value="C:cytosolic large ribosomal subunit"/>
    <property type="evidence" value="ECO:0007669"/>
    <property type="project" value="TreeGrafter"/>
</dbReference>
<dbReference type="GO" id="GO:0003735">
    <property type="term" value="F:structural constituent of ribosome"/>
    <property type="evidence" value="ECO:0007669"/>
    <property type="project" value="InterPro"/>
</dbReference>
<dbReference type="GO" id="GO:0006412">
    <property type="term" value="P:translation"/>
    <property type="evidence" value="ECO:0007669"/>
    <property type="project" value="UniProtKB-UniRule"/>
</dbReference>
<dbReference type="CDD" id="cd01658">
    <property type="entry name" value="Ribosomal_L30"/>
    <property type="match status" value="1"/>
</dbReference>
<dbReference type="FunFam" id="3.30.1390.20:FF:000001">
    <property type="entry name" value="50S ribosomal protein L30"/>
    <property type="match status" value="1"/>
</dbReference>
<dbReference type="Gene3D" id="3.30.1390.20">
    <property type="entry name" value="Ribosomal protein L30, ferredoxin-like fold domain"/>
    <property type="match status" value="1"/>
</dbReference>
<dbReference type="HAMAP" id="MF_01371_B">
    <property type="entry name" value="Ribosomal_uL30_B"/>
    <property type="match status" value="1"/>
</dbReference>
<dbReference type="InterPro" id="IPR036919">
    <property type="entry name" value="Ribo_uL30_ferredoxin-like_sf"/>
</dbReference>
<dbReference type="InterPro" id="IPR005996">
    <property type="entry name" value="Ribosomal_uL30_bac-type"/>
</dbReference>
<dbReference type="InterPro" id="IPR016082">
    <property type="entry name" value="Ribosomal_uL30_ferredoxin-like"/>
</dbReference>
<dbReference type="NCBIfam" id="TIGR01308">
    <property type="entry name" value="rpmD_bact"/>
    <property type="match status" value="1"/>
</dbReference>
<dbReference type="PANTHER" id="PTHR15892:SF2">
    <property type="entry name" value="LARGE RIBOSOMAL SUBUNIT PROTEIN UL30M"/>
    <property type="match status" value="1"/>
</dbReference>
<dbReference type="PANTHER" id="PTHR15892">
    <property type="entry name" value="MITOCHONDRIAL RIBOSOMAL PROTEIN L30"/>
    <property type="match status" value="1"/>
</dbReference>
<dbReference type="Pfam" id="PF00327">
    <property type="entry name" value="Ribosomal_L30"/>
    <property type="match status" value="1"/>
</dbReference>
<dbReference type="PIRSF" id="PIRSF002211">
    <property type="entry name" value="Ribosomal_L30_bac-type"/>
    <property type="match status" value="1"/>
</dbReference>
<dbReference type="SUPFAM" id="SSF55129">
    <property type="entry name" value="Ribosomal protein L30p/L7e"/>
    <property type="match status" value="1"/>
</dbReference>